<accession>C4K6M7</accession>
<organism>
    <name type="scientific">Hamiltonella defensa subsp. Acyrthosiphon pisum (strain 5AT)</name>
    <dbReference type="NCBI Taxonomy" id="572265"/>
    <lineage>
        <taxon>Bacteria</taxon>
        <taxon>Pseudomonadati</taxon>
        <taxon>Pseudomonadota</taxon>
        <taxon>Gammaproteobacteria</taxon>
        <taxon>Enterobacterales</taxon>
        <taxon>Enterobacteriaceae</taxon>
        <taxon>aphid secondary symbionts</taxon>
        <taxon>Candidatus Hamiltonella</taxon>
    </lineage>
</organism>
<reference key="1">
    <citation type="journal article" date="2009" name="Proc. Natl. Acad. Sci. U.S.A.">
        <title>Hamiltonella defensa, genome evolution of protective bacterial endosymbiont from pathogenic ancestors.</title>
        <authorList>
            <person name="Degnan P.H."/>
            <person name="Yu Y."/>
            <person name="Sisneros N."/>
            <person name="Wing R.A."/>
            <person name="Moran N.A."/>
        </authorList>
    </citation>
    <scope>NUCLEOTIDE SEQUENCE [LARGE SCALE GENOMIC DNA]</scope>
    <source>
        <strain>5AT</strain>
    </source>
</reference>
<feature type="chain" id="PRO_1000205070" description="1-deoxy-D-xylulose-5-phosphate synthase">
    <location>
        <begin position="1"/>
        <end position="622"/>
    </location>
</feature>
<feature type="binding site" evidence="1">
    <location>
        <position position="80"/>
    </location>
    <ligand>
        <name>thiamine diphosphate</name>
        <dbReference type="ChEBI" id="CHEBI:58937"/>
    </ligand>
</feature>
<feature type="binding site" evidence="1">
    <location>
        <begin position="121"/>
        <end position="123"/>
    </location>
    <ligand>
        <name>thiamine diphosphate</name>
        <dbReference type="ChEBI" id="CHEBI:58937"/>
    </ligand>
</feature>
<feature type="binding site" evidence="1">
    <location>
        <position position="152"/>
    </location>
    <ligand>
        <name>Mg(2+)</name>
        <dbReference type="ChEBI" id="CHEBI:18420"/>
    </ligand>
</feature>
<feature type="binding site" evidence="1">
    <location>
        <begin position="153"/>
        <end position="154"/>
    </location>
    <ligand>
        <name>thiamine diphosphate</name>
        <dbReference type="ChEBI" id="CHEBI:58937"/>
    </ligand>
</feature>
<feature type="binding site" evidence="1">
    <location>
        <position position="181"/>
    </location>
    <ligand>
        <name>Mg(2+)</name>
        <dbReference type="ChEBI" id="CHEBI:18420"/>
    </ligand>
</feature>
<feature type="binding site" evidence="1">
    <location>
        <position position="181"/>
    </location>
    <ligand>
        <name>thiamine diphosphate</name>
        <dbReference type="ChEBI" id="CHEBI:58937"/>
    </ligand>
</feature>
<feature type="binding site" evidence="1">
    <location>
        <position position="288"/>
    </location>
    <ligand>
        <name>thiamine diphosphate</name>
        <dbReference type="ChEBI" id="CHEBI:58937"/>
    </ligand>
</feature>
<feature type="binding site" evidence="1">
    <location>
        <position position="370"/>
    </location>
    <ligand>
        <name>thiamine diphosphate</name>
        <dbReference type="ChEBI" id="CHEBI:58937"/>
    </ligand>
</feature>
<gene>
    <name evidence="1" type="primary">dxs</name>
    <name type="ordered locus">HDEF_1608</name>
</gene>
<dbReference type="EC" id="2.2.1.7" evidence="1"/>
<dbReference type="EMBL" id="CP001277">
    <property type="protein sequence ID" value="ACQ68220.1"/>
    <property type="molecule type" value="Genomic_DNA"/>
</dbReference>
<dbReference type="RefSeq" id="WP_015873987.1">
    <property type="nucleotide sequence ID" value="NC_012751.1"/>
</dbReference>
<dbReference type="SMR" id="C4K6M7"/>
<dbReference type="STRING" id="572265.HDEF_1608"/>
<dbReference type="GeneID" id="66261218"/>
<dbReference type="KEGG" id="hde:HDEF_1608"/>
<dbReference type="eggNOG" id="COG1154">
    <property type="taxonomic scope" value="Bacteria"/>
</dbReference>
<dbReference type="HOGENOM" id="CLU_009227_1_4_6"/>
<dbReference type="UniPathway" id="UPA00064">
    <property type="reaction ID" value="UER00091"/>
</dbReference>
<dbReference type="Proteomes" id="UP000002334">
    <property type="component" value="Chromosome"/>
</dbReference>
<dbReference type="GO" id="GO:0005829">
    <property type="term" value="C:cytosol"/>
    <property type="evidence" value="ECO:0007669"/>
    <property type="project" value="TreeGrafter"/>
</dbReference>
<dbReference type="GO" id="GO:0008661">
    <property type="term" value="F:1-deoxy-D-xylulose-5-phosphate synthase activity"/>
    <property type="evidence" value="ECO:0007669"/>
    <property type="project" value="UniProtKB-UniRule"/>
</dbReference>
<dbReference type="GO" id="GO:0000287">
    <property type="term" value="F:magnesium ion binding"/>
    <property type="evidence" value="ECO:0007669"/>
    <property type="project" value="UniProtKB-UniRule"/>
</dbReference>
<dbReference type="GO" id="GO:0030976">
    <property type="term" value="F:thiamine pyrophosphate binding"/>
    <property type="evidence" value="ECO:0007669"/>
    <property type="project" value="UniProtKB-UniRule"/>
</dbReference>
<dbReference type="GO" id="GO:0052865">
    <property type="term" value="P:1-deoxy-D-xylulose 5-phosphate biosynthetic process"/>
    <property type="evidence" value="ECO:0007669"/>
    <property type="project" value="UniProtKB-UniPathway"/>
</dbReference>
<dbReference type="GO" id="GO:0019288">
    <property type="term" value="P:isopentenyl diphosphate biosynthetic process, methylerythritol 4-phosphate pathway"/>
    <property type="evidence" value="ECO:0007669"/>
    <property type="project" value="TreeGrafter"/>
</dbReference>
<dbReference type="GO" id="GO:0016114">
    <property type="term" value="P:terpenoid biosynthetic process"/>
    <property type="evidence" value="ECO:0007669"/>
    <property type="project" value="UniProtKB-UniRule"/>
</dbReference>
<dbReference type="GO" id="GO:0009228">
    <property type="term" value="P:thiamine biosynthetic process"/>
    <property type="evidence" value="ECO:0007669"/>
    <property type="project" value="UniProtKB-UniRule"/>
</dbReference>
<dbReference type="CDD" id="cd02007">
    <property type="entry name" value="TPP_DXS"/>
    <property type="match status" value="1"/>
</dbReference>
<dbReference type="CDD" id="cd07033">
    <property type="entry name" value="TPP_PYR_DXS_TK_like"/>
    <property type="match status" value="1"/>
</dbReference>
<dbReference type="FunFam" id="3.40.50.920:FF:000002">
    <property type="entry name" value="1-deoxy-D-xylulose-5-phosphate synthase"/>
    <property type="match status" value="1"/>
</dbReference>
<dbReference type="FunFam" id="3.40.50.970:FF:000005">
    <property type="entry name" value="1-deoxy-D-xylulose-5-phosphate synthase"/>
    <property type="match status" value="1"/>
</dbReference>
<dbReference type="Gene3D" id="3.40.50.920">
    <property type="match status" value="1"/>
</dbReference>
<dbReference type="Gene3D" id="3.40.50.970">
    <property type="match status" value="2"/>
</dbReference>
<dbReference type="HAMAP" id="MF_00315">
    <property type="entry name" value="DXP_synth"/>
    <property type="match status" value="1"/>
</dbReference>
<dbReference type="InterPro" id="IPR005477">
    <property type="entry name" value="Dxylulose-5-P_synthase"/>
</dbReference>
<dbReference type="InterPro" id="IPR029061">
    <property type="entry name" value="THDP-binding"/>
</dbReference>
<dbReference type="InterPro" id="IPR009014">
    <property type="entry name" value="Transketo_C/PFOR_II"/>
</dbReference>
<dbReference type="InterPro" id="IPR005475">
    <property type="entry name" value="Transketolase-like_Pyr-bd"/>
</dbReference>
<dbReference type="InterPro" id="IPR020826">
    <property type="entry name" value="Transketolase_BS"/>
</dbReference>
<dbReference type="InterPro" id="IPR033248">
    <property type="entry name" value="Transketolase_C"/>
</dbReference>
<dbReference type="InterPro" id="IPR049557">
    <property type="entry name" value="Transketolase_CS"/>
</dbReference>
<dbReference type="NCBIfam" id="TIGR00204">
    <property type="entry name" value="dxs"/>
    <property type="match status" value="1"/>
</dbReference>
<dbReference type="NCBIfam" id="NF003933">
    <property type="entry name" value="PRK05444.2-2"/>
    <property type="match status" value="1"/>
</dbReference>
<dbReference type="PANTHER" id="PTHR43322">
    <property type="entry name" value="1-D-DEOXYXYLULOSE 5-PHOSPHATE SYNTHASE-RELATED"/>
    <property type="match status" value="1"/>
</dbReference>
<dbReference type="PANTHER" id="PTHR43322:SF5">
    <property type="entry name" value="1-DEOXY-D-XYLULOSE-5-PHOSPHATE SYNTHASE, CHLOROPLASTIC"/>
    <property type="match status" value="1"/>
</dbReference>
<dbReference type="Pfam" id="PF13292">
    <property type="entry name" value="DXP_synthase_N"/>
    <property type="match status" value="1"/>
</dbReference>
<dbReference type="Pfam" id="PF02779">
    <property type="entry name" value="Transket_pyr"/>
    <property type="match status" value="1"/>
</dbReference>
<dbReference type="Pfam" id="PF02780">
    <property type="entry name" value="Transketolase_C"/>
    <property type="match status" value="1"/>
</dbReference>
<dbReference type="SMART" id="SM00861">
    <property type="entry name" value="Transket_pyr"/>
    <property type="match status" value="1"/>
</dbReference>
<dbReference type="SUPFAM" id="SSF52518">
    <property type="entry name" value="Thiamin diphosphate-binding fold (THDP-binding)"/>
    <property type="match status" value="2"/>
</dbReference>
<dbReference type="SUPFAM" id="SSF52922">
    <property type="entry name" value="TK C-terminal domain-like"/>
    <property type="match status" value="1"/>
</dbReference>
<dbReference type="PROSITE" id="PS00801">
    <property type="entry name" value="TRANSKETOLASE_1"/>
    <property type="match status" value="1"/>
</dbReference>
<dbReference type="PROSITE" id="PS00802">
    <property type="entry name" value="TRANSKETOLASE_2"/>
    <property type="match status" value="1"/>
</dbReference>
<comment type="function">
    <text evidence="1">Catalyzes the acyloin condensation reaction between C atoms 2 and 3 of pyruvate and glyceraldehyde 3-phosphate to yield 1-deoxy-D-xylulose-5-phosphate (DXP).</text>
</comment>
<comment type="catalytic activity">
    <reaction evidence="1">
        <text>D-glyceraldehyde 3-phosphate + pyruvate + H(+) = 1-deoxy-D-xylulose 5-phosphate + CO2</text>
        <dbReference type="Rhea" id="RHEA:12605"/>
        <dbReference type="ChEBI" id="CHEBI:15361"/>
        <dbReference type="ChEBI" id="CHEBI:15378"/>
        <dbReference type="ChEBI" id="CHEBI:16526"/>
        <dbReference type="ChEBI" id="CHEBI:57792"/>
        <dbReference type="ChEBI" id="CHEBI:59776"/>
        <dbReference type="EC" id="2.2.1.7"/>
    </reaction>
</comment>
<comment type="cofactor">
    <cofactor evidence="1">
        <name>Mg(2+)</name>
        <dbReference type="ChEBI" id="CHEBI:18420"/>
    </cofactor>
    <text evidence="1">Binds 1 Mg(2+) ion per subunit.</text>
</comment>
<comment type="cofactor">
    <cofactor evidence="1">
        <name>thiamine diphosphate</name>
        <dbReference type="ChEBI" id="CHEBI:58937"/>
    </cofactor>
    <text evidence="1">Binds 1 thiamine pyrophosphate per subunit.</text>
</comment>
<comment type="pathway">
    <text evidence="1">Metabolic intermediate biosynthesis; 1-deoxy-D-xylulose 5-phosphate biosynthesis; 1-deoxy-D-xylulose 5-phosphate from D-glyceraldehyde 3-phosphate and pyruvate: step 1/1.</text>
</comment>
<comment type="subunit">
    <text evidence="1">Homodimer.</text>
</comment>
<comment type="similarity">
    <text evidence="1">Belongs to the transketolase family. DXPS subfamily.</text>
</comment>
<proteinExistence type="inferred from homology"/>
<sequence length="622" mass="68352">MNFNKEKYPTLALAETPESLRLLPKESLPELCSELRSYLLDAVSQSSGHFASGLGVIELTLALHYVYKTPFDHLIWDVGHQAYPHKILTGRRDQIDRIRQKNGLHPFPSREESDYDVLSVGHSSTSISAGLGLAVAAEREGLGRKIICVIGDGAITAGMAFEAMNHAGELHSDMLVILNDNDMSISENVGGLNNRFAQLLSGSFYTRLREKGKKAFSAAPPIKALLKRTEEHLKGMVVPSTLFEELGFNYIGPIDGHHIYTLVHMLENMRHLKGPQLLHVVTKKGKGYTPAEKDPIAWHAVPRFDPLSGTLPKTVDSIPTYSNIFGDWLCDTAATDPRLMAITPAMREGSGMVRFSREYPKQYFDVAIAEQHAVTFAAGLAIGGYKPVVAIYSTFLQRAYDQLIHDVAIQNLPVLFAIDRAGLVGADGQTHQGAFDLSFMRCIPNMVIMAPSDENECRQMLHTGYLHPGPAAVRYPRGQGTGVALQPLFPLTIGKSEIKIQGEKIALLCFGTLLSVAREVAIHLNATLVDMRFIKPLDTELILAMASNHSLLVTIEENVIKGGAGSAVNECLMSHKKTVMLLNIGLPDQFIPQGEQNEMRAAYGLDSRGIQKQIQAYCESEM</sequence>
<evidence type="ECO:0000255" key="1">
    <source>
        <dbReference type="HAMAP-Rule" id="MF_00315"/>
    </source>
</evidence>
<keyword id="KW-0414">Isoprene biosynthesis</keyword>
<keyword id="KW-0460">Magnesium</keyword>
<keyword id="KW-0479">Metal-binding</keyword>
<keyword id="KW-0784">Thiamine biosynthesis</keyword>
<keyword id="KW-0786">Thiamine pyrophosphate</keyword>
<keyword id="KW-0808">Transferase</keyword>
<name>DXS_HAMD5</name>
<protein>
    <recommendedName>
        <fullName evidence="1">1-deoxy-D-xylulose-5-phosphate synthase</fullName>
        <ecNumber evidence="1">2.2.1.7</ecNumber>
    </recommendedName>
    <alternativeName>
        <fullName evidence="1">1-deoxyxylulose-5-phosphate synthase</fullName>
        <shortName evidence="1">DXP synthase</shortName>
        <shortName evidence="1">DXPS</shortName>
    </alternativeName>
</protein>